<accession>Q02DS7</accession>
<evidence type="ECO:0000250" key="1">
    <source>
        <dbReference type="UniProtKB" id="P0AAD2"/>
    </source>
</evidence>
<evidence type="ECO:0000255" key="2"/>
<evidence type="ECO:0000269" key="3">
    <source>
    </source>
</evidence>
<evidence type="ECO:0000305" key="4"/>
<comment type="function">
    <text evidence="1">Involved in the transport of tryptophan into the cell.</text>
</comment>
<comment type="catalytic activity">
    <reaction evidence="1">
        <text>L-tryptophan(in) + H(+)(in) = L-tryptophan(out) + H(+)(out)</text>
        <dbReference type="Rhea" id="RHEA:28879"/>
        <dbReference type="ChEBI" id="CHEBI:15378"/>
        <dbReference type="ChEBI" id="CHEBI:57912"/>
    </reaction>
    <physiologicalReaction direction="right-to-left" evidence="1">
        <dbReference type="Rhea" id="RHEA:28881"/>
    </physiologicalReaction>
</comment>
<comment type="subcellular location">
    <subcellularLocation>
        <location evidence="1">Cell inner membrane</location>
        <topology evidence="2">Multi-pass membrane protein</topology>
    </subcellularLocation>
    <subcellularLocation>
        <location evidence="3">Secreted</location>
    </subcellularLocation>
    <text evidence="4">Could be present extracellularly due to cell lysis.</text>
</comment>
<comment type="similarity">
    <text evidence="4">Belongs to the amino acid/polyamine transporter 2 family. Mtr/TnaB/TyrP permease subfamily.</text>
</comment>
<sequence>MSSSPAQTPSRRPSLLGGSMIIAGTAVGAGMFSLPIAMSGIWFGWSVAVFLLTWFCMLLSGMMILEANLNYPVGSSFSTITRDLLGQGWNVVNGLSIAFVLYILTYAYISGGGSIIGYTLSSGLGVTLPEKLAGLLFALAVALVVWWSTRAVDRITTLMLGGMIITFGLSISGLLGRIQPAILFNSGEPDAVYWPYLLATLPFCLTSFGYHGNVPSLMKYYGKDPQRISRSLWIGTLIALAIYLLWQASTLGTIPREQFKGIIAGGSNVGTLVEYLHRITASDSLNALLTTFSNLAVASSFLGVTLGLFDYLADLCRFDDSHFGRFKTALLTFVPPTIGGLLFPNGFIYAIGFAGLAAAFWAVIVPALMARASRKRFGSPLFRAWGGTPAIVLVLLFGVANAVAHILASLHWLPEYR</sequence>
<dbReference type="EMBL" id="CP000438">
    <property type="protein sequence ID" value="ABJ14818.1"/>
    <property type="molecule type" value="Genomic_DNA"/>
</dbReference>
<dbReference type="RefSeq" id="WP_003096841.1">
    <property type="nucleotide sequence ID" value="NZ_CP034244.1"/>
</dbReference>
<dbReference type="iPTMnet" id="Q02DS7"/>
<dbReference type="KEGG" id="pau:PA14_71710"/>
<dbReference type="PseudoCAP" id="PA14_71710"/>
<dbReference type="HOGENOM" id="CLU_038102_2_1_6"/>
<dbReference type="BioCyc" id="PAER208963:G1G74-6036-MONOMER"/>
<dbReference type="Proteomes" id="UP000000653">
    <property type="component" value="Chromosome"/>
</dbReference>
<dbReference type="GO" id="GO:0005576">
    <property type="term" value="C:extracellular region"/>
    <property type="evidence" value="ECO:0007669"/>
    <property type="project" value="UniProtKB-SubCell"/>
</dbReference>
<dbReference type="GO" id="GO:0005886">
    <property type="term" value="C:plasma membrane"/>
    <property type="evidence" value="ECO:0007669"/>
    <property type="project" value="UniProtKB-SubCell"/>
</dbReference>
<dbReference type="GO" id="GO:0015173">
    <property type="term" value="F:aromatic amino acid transmembrane transporter activity"/>
    <property type="evidence" value="ECO:0007669"/>
    <property type="project" value="InterPro"/>
</dbReference>
<dbReference type="GO" id="GO:0015293">
    <property type="term" value="F:symporter activity"/>
    <property type="evidence" value="ECO:0007669"/>
    <property type="project" value="UniProtKB-KW"/>
</dbReference>
<dbReference type="GO" id="GO:0003333">
    <property type="term" value="P:amino acid transmembrane transport"/>
    <property type="evidence" value="ECO:0007669"/>
    <property type="project" value="InterPro"/>
</dbReference>
<dbReference type="FunFam" id="1.20.1740.10:FF:000019">
    <property type="entry name" value="Tryptophan permease TnaB"/>
    <property type="match status" value="1"/>
</dbReference>
<dbReference type="Gene3D" id="1.20.1740.10">
    <property type="entry name" value="Amino acid/polyamine transporter I"/>
    <property type="match status" value="1"/>
</dbReference>
<dbReference type="InterPro" id="IPR018227">
    <property type="entry name" value="Amino_acid_transport_2"/>
</dbReference>
<dbReference type="InterPro" id="IPR013059">
    <property type="entry name" value="Trp_tyr_transpt"/>
</dbReference>
<dbReference type="NCBIfam" id="TIGR00837">
    <property type="entry name" value="araaP"/>
    <property type="match status" value="1"/>
</dbReference>
<dbReference type="NCBIfam" id="NF007789">
    <property type="entry name" value="PRK10483.1"/>
    <property type="match status" value="1"/>
</dbReference>
<dbReference type="PANTHER" id="PTHR46997">
    <property type="entry name" value="LOW AFFINITY TRYPTOPHAN PERMEASE-RELATED"/>
    <property type="match status" value="1"/>
</dbReference>
<dbReference type="PANTHER" id="PTHR46997:SF1">
    <property type="entry name" value="LOW AFFINITY TRYPTOPHAN PERMEASE-RELATED"/>
    <property type="match status" value="1"/>
</dbReference>
<dbReference type="Pfam" id="PF03222">
    <property type="entry name" value="Trp_Tyr_perm"/>
    <property type="match status" value="1"/>
</dbReference>
<dbReference type="PIRSF" id="PIRSF006060">
    <property type="entry name" value="AA_transporter"/>
    <property type="match status" value="1"/>
</dbReference>
<dbReference type="PRINTS" id="PR00166">
    <property type="entry name" value="AROAAPRMEASE"/>
</dbReference>
<proteinExistence type="evidence at protein level"/>
<keyword id="KW-0029">Amino-acid transport</keyword>
<keyword id="KW-0997">Cell inner membrane</keyword>
<keyword id="KW-1003">Cell membrane</keyword>
<keyword id="KW-0472">Membrane</keyword>
<keyword id="KW-0597">Phosphoprotein</keyword>
<keyword id="KW-0964">Secreted</keyword>
<keyword id="KW-0769">Symport</keyword>
<keyword id="KW-0812">Transmembrane</keyword>
<keyword id="KW-1133">Transmembrane helix</keyword>
<keyword id="KW-0813">Transport</keyword>
<feature type="chain" id="PRO_0000431334" description="Tryptophan-specific transport protein">
    <location>
        <begin position="1"/>
        <end position="417"/>
    </location>
</feature>
<feature type="transmembrane region" description="Helical" evidence="2">
    <location>
        <begin position="16"/>
        <end position="36"/>
    </location>
</feature>
<feature type="transmembrane region" description="Helical" evidence="2">
    <location>
        <begin position="40"/>
        <end position="60"/>
    </location>
</feature>
<feature type="transmembrane region" description="Helical" evidence="2">
    <location>
        <begin position="97"/>
        <end position="117"/>
    </location>
</feature>
<feature type="transmembrane region" description="Helical" evidence="2">
    <location>
        <begin position="126"/>
        <end position="146"/>
    </location>
</feature>
<feature type="transmembrane region" description="Helical" evidence="2">
    <location>
        <begin position="155"/>
        <end position="175"/>
    </location>
</feature>
<feature type="transmembrane region" description="Helical" evidence="2">
    <location>
        <begin position="191"/>
        <end position="211"/>
    </location>
</feature>
<feature type="transmembrane region" description="Helical" evidence="2">
    <location>
        <begin position="232"/>
        <end position="252"/>
    </location>
</feature>
<feature type="transmembrane region" description="Helical" evidence="2">
    <location>
        <begin position="295"/>
        <end position="315"/>
    </location>
</feature>
<feature type="transmembrane region" description="Helical" evidence="2">
    <location>
        <begin position="326"/>
        <end position="346"/>
    </location>
</feature>
<feature type="transmembrane region" description="Helical" evidence="2">
    <location>
        <begin position="347"/>
        <end position="367"/>
    </location>
</feature>
<feature type="transmembrane region" description="Helical" evidence="2">
    <location>
        <begin position="390"/>
        <end position="410"/>
    </location>
</feature>
<feature type="modified residue" description="Phosphothreonine" evidence="3">
    <location>
        <position position="8"/>
    </location>
</feature>
<protein>
    <recommendedName>
        <fullName>Tryptophan-specific transport protein</fullName>
    </recommendedName>
    <alternativeName>
        <fullName>Tryptophan permease</fullName>
    </alternativeName>
</protein>
<gene>
    <name type="primary">mtr</name>
    <name type="ordered locus">PA14_71710</name>
</gene>
<name>MTR_PSEAB</name>
<reference key="1">
    <citation type="journal article" date="2006" name="Genome Biol.">
        <title>Genomic analysis reveals that Pseudomonas aeruginosa virulence is combinatorial.</title>
        <authorList>
            <person name="Lee D.G."/>
            <person name="Urbach J.M."/>
            <person name="Wu G."/>
            <person name="Liberati N.T."/>
            <person name="Feinbaum R.L."/>
            <person name="Miyata S."/>
            <person name="Diggins L.T."/>
            <person name="He J."/>
            <person name="Saucier M."/>
            <person name="Deziel E."/>
            <person name="Friedman L."/>
            <person name="Li L."/>
            <person name="Grills G."/>
            <person name="Montgomery K."/>
            <person name="Kucherlapati R."/>
            <person name="Rahme L.G."/>
            <person name="Ausubel F.M."/>
        </authorList>
    </citation>
    <scope>NUCLEOTIDE SEQUENCE [LARGE SCALE GENOMIC DNA]</scope>
    <source>
        <strain>UCBPP-PA14</strain>
    </source>
</reference>
<reference key="2">
    <citation type="journal article" date="2014" name="Proteomics">
        <title>Extracellular Ser/Thr/Tyr phosphorylated proteins of Pseudomonas aeruginosa PA14 strain.</title>
        <authorList>
            <person name="Ouidir T."/>
            <person name="Jarnier F."/>
            <person name="Cosette P."/>
            <person name="Jouenne T."/>
            <person name="Hardouin J."/>
        </authorList>
    </citation>
    <scope>IDENTIFICATION BY MASS SPECTROMETRY</scope>
    <scope>SUBCELLULAR LOCATION</scope>
    <scope>PHOSPHORYLATION AT THR-8</scope>
    <source>
        <strain>UCBPP-PA14</strain>
    </source>
</reference>
<organism>
    <name type="scientific">Pseudomonas aeruginosa (strain UCBPP-PA14)</name>
    <dbReference type="NCBI Taxonomy" id="208963"/>
    <lineage>
        <taxon>Bacteria</taxon>
        <taxon>Pseudomonadati</taxon>
        <taxon>Pseudomonadota</taxon>
        <taxon>Gammaproteobacteria</taxon>
        <taxon>Pseudomonadales</taxon>
        <taxon>Pseudomonadaceae</taxon>
        <taxon>Pseudomonas</taxon>
    </lineage>
</organism>